<reference key="1">
    <citation type="journal article" date="2006" name="DNA Res.">
        <title>Genome sequence of the cat pathogen, Chlamydophila felis.</title>
        <authorList>
            <person name="Azuma Y."/>
            <person name="Hirakawa H."/>
            <person name="Yamashita A."/>
            <person name="Cai Y."/>
            <person name="Rahman M.A."/>
            <person name="Suzuki H."/>
            <person name="Mitaku S."/>
            <person name="Toh H."/>
            <person name="Goto S."/>
            <person name="Murakami T."/>
            <person name="Sugi K."/>
            <person name="Hayashi H."/>
            <person name="Fukushi H."/>
            <person name="Hattori M."/>
            <person name="Kuhara S."/>
            <person name="Shirai M."/>
        </authorList>
    </citation>
    <scope>NUCLEOTIDE SEQUENCE [LARGE SCALE GENOMIC DNA]</scope>
    <source>
        <strain>Fe/C-56</strain>
    </source>
</reference>
<organism>
    <name type="scientific">Chlamydia felis (strain Fe/C-56)</name>
    <name type="common">Chlamydophila felis</name>
    <dbReference type="NCBI Taxonomy" id="264202"/>
    <lineage>
        <taxon>Bacteria</taxon>
        <taxon>Pseudomonadati</taxon>
        <taxon>Chlamydiota</taxon>
        <taxon>Chlamydiia</taxon>
        <taxon>Chlamydiales</taxon>
        <taxon>Chlamydiaceae</taxon>
        <taxon>Chlamydia/Chlamydophila group</taxon>
        <taxon>Chlamydia</taxon>
    </lineage>
</organism>
<sequence>MSNRSRSTLLTISFFVLIDWVTKLAVLLYRGNLPNANPILYQYSWGKLFFCICPTFNEGAAFGLFSKYKYFLLLIRIVIILGILAFLFLRKKKTSATTRFSLILLCSGAIGNVGDIFFYNHVIDFISIGYNRWSFPTFNFADIFISLGTLIFVYKLYFPTKQKIK</sequence>
<name>LSPA_CHLFF</name>
<feature type="chain" id="PRO_0000289364" description="Lipoprotein signal peptidase">
    <location>
        <begin position="1"/>
        <end position="165"/>
    </location>
</feature>
<feature type="transmembrane region" description="Helical" evidence="1">
    <location>
        <begin position="9"/>
        <end position="29"/>
    </location>
</feature>
<feature type="transmembrane region" description="Helical" evidence="1">
    <location>
        <begin position="69"/>
        <end position="89"/>
    </location>
</feature>
<feature type="transmembrane region" description="Helical" evidence="1">
    <location>
        <begin position="100"/>
        <end position="120"/>
    </location>
</feature>
<feature type="transmembrane region" description="Helical" evidence="1">
    <location>
        <begin position="133"/>
        <end position="153"/>
    </location>
</feature>
<feature type="active site" evidence="1">
    <location>
        <position position="124"/>
    </location>
</feature>
<feature type="active site" evidence="1">
    <location>
        <position position="142"/>
    </location>
</feature>
<proteinExistence type="inferred from homology"/>
<keyword id="KW-0064">Aspartyl protease</keyword>
<keyword id="KW-0997">Cell inner membrane</keyword>
<keyword id="KW-1003">Cell membrane</keyword>
<keyword id="KW-0378">Hydrolase</keyword>
<keyword id="KW-0472">Membrane</keyword>
<keyword id="KW-0645">Protease</keyword>
<keyword id="KW-0812">Transmembrane</keyword>
<keyword id="KW-1133">Transmembrane helix</keyword>
<dbReference type="EC" id="3.4.23.36" evidence="1"/>
<dbReference type="EMBL" id="AP006861">
    <property type="protein sequence ID" value="BAE81569.1"/>
    <property type="molecule type" value="Genomic_DNA"/>
</dbReference>
<dbReference type="RefSeq" id="WP_011458346.1">
    <property type="nucleotide sequence ID" value="NC_007899.1"/>
</dbReference>
<dbReference type="SMR" id="Q253G9"/>
<dbReference type="STRING" id="264202.CF0797"/>
<dbReference type="KEGG" id="cfe:CF0797"/>
<dbReference type="eggNOG" id="COG0597">
    <property type="taxonomic scope" value="Bacteria"/>
</dbReference>
<dbReference type="HOGENOM" id="CLU_083252_3_0_0"/>
<dbReference type="OrthoDB" id="9810259at2"/>
<dbReference type="UniPathway" id="UPA00665"/>
<dbReference type="Proteomes" id="UP000001260">
    <property type="component" value="Chromosome"/>
</dbReference>
<dbReference type="GO" id="GO:0005886">
    <property type="term" value="C:plasma membrane"/>
    <property type="evidence" value="ECO:0007669"/>
    <property type="project" value="UniProtKB-SubCell"/>
</dbReference>
<dbReference type="GO" id="GO:0004190">
    <property type="term" value="F:aspartic-type endopeptidase activity"/>
    <property type="evidence" value="ECO:0007669"/>
    <property type="project" value="UniProtKB-UniRule"/>
</dbReference>
<dbReference type="GO" id="GO:0006508">
    <property type="term" value="P:proteolysis"/>
    <property type="evidence" value="ECO:0007669"/>
    <property type="project" value="UniProtKB-KW"/>
</dbReference>
<dbReference type="HAMAP" id="MF_00161">
    <property type="entry name" value="LspA"/>
    <property type="match status" value="1"/>
</dbReference>
<dbReference type="InterPro" id="IPR001872">
    <property type="entry name" value="Peptidase_A8"/>
</dbReference>
<dbReference type="NCBIfam" id="TIGR00077">
    <property type="entry name" value="lspA"/>
    <property type="match status" value="1"/>
</dbReference>
<dbReference type="PANTHER" id="PTHR33695">
    <property type="entry name" value="LIPOPROTEIN SIGNAL PEPTIDASE"/>
    <property type="match status" value="1"/>
</dbReference>
<dbReference type="PANTHER" id="PTHR33695:SF1">
    <property type="entry name" value="LIPOPROTEIN SIGNAL PEPTIDASE"/>
    <property type="match status" value="1"/>
</dbReference>
<dbReference type="Pfam" id="PF01252">
    <property type="entry name" value="Peptidase_A8"/>
    <property type="match status" value="1"/>
</dbReference>
<dbReference type="PRINTS" id="PR00781">
    <property type="entry name" value="LIPOSIGPTASE"/>
</dbReference>
<dbReference type="PROSITE" id="PS00855">
    <property type="entry name" value="SPASE_II"/>
    <property type="match status" value="1"/>
</dbReference>
<comment type="function">
    <text evidence="1">This protein specifically catalyzes the removal of signal peptides from prolipoproteins.</text>
</comment>
<comment type="catalytic activity">
    <reaction evidence="1">
        <text>Release of signal peptides from bacterial membrane prolipoproteins. Hydrolyzes -Xaa-Yaa-Zaa-|-(S,diacylglyceryl)Cys-, in which Xaa is hydrophobic (preferably Leu), and Yaa (Ala or Ser) and Zaa (Gly or Ala) have small, neutral side chains.</text>
        <dbReference type="EC" id="3.4.23.36"/>
    </reaction>
</comment>
<comment type="pathway">
    <text evidence="1">Protein modification; lipoprotein biosynthesis (signal peptide cleavage).</text>
</comment>
<comment type="subcellular location">
    <subcellularLocation>
        <location evidence="1">Cell inner membrane</location>
        <topology evidence="1">Multi-pass membrane protein</topology>
    </subcellularLocation>
</comment>
<comment type="similarity">
    <text evidence="1">Belongs to the peptidase A8 family.</text>
</comment>
<accession>Q253G9</accession>
<evidence type="ECO:0000255" key="1">
    <source>
        <dbReference type="HAMAP-Rule" id="MF_00161"/>
    </source>
</evidence>
<protein>
    <recommendedName>
        <fullName evidence="1">Lipoprotein signal peptidase</fullName>
        <ecNumber evidence="1">3.4.23.36</ecNumber>
    </recommendedName>
    <alternativeName>
        <fullName evidence="1">Prolipoprotein signal peptidase</fullName>
    </alternativeName>
    <alternativeName>
        <fullName evidence="1">Signal peptidase II</fullName>
        <shortName evidence="1">SPase II</shortName>
    </alternativeName>
</protein>
<gene>
    <name evidence="1" type="primary">lspA</name>
    <name type="ordered locus">CF0797</name>
</gene>